<keyword id="KW-0963">Cytoplasm</keyword>
<keyword id="KW-1185">Reference proteome</keyword>
<keyword id="KW-0694">RNA-binding</keyword>
<sequence length="157" mass="18067">MAKKNHQGLDANLIAQNKKARHDYTVTDTFEAGLVLTGTEIKSVRARRVTLKDGYAQFHNGELWLMNVHIAEFAGGNIFNHDPLRNRKLLLHKKELKKLQGELTAKGVTLVPLKMYLKHGYAKVLLGLAQGKHEYDKRNAIKKREQDRQIDRVMKHY</sequence>
<evidence type="ECO:0000255" key="1">
    <source>
        <dbReference type="HAMAP-Rule" id="MF_00023"/>
    </source>
</evidence>
<dbReference type="EMBL" id="AP008937">
    <property type="protein sequence ID" value="BAG26707.1"/>
    <property type="molecule type" value="Genomic_DNA"/>
</dbReference>
<dbReference type="RefSeq" id="WP_003682651.1">
    <property type="nucleotide sequence ID" value="NC_010610.1"/>
</dbReference>
<dbReference type="SMR" id="B2GAM5"/>
<dbReference type="GeneID" id="83715299"/>
<dbReference type="KEGG" id="lfe:LAF_0371"/>
<dbReference type="eggNOG" id="COG0691">
    <property type="taxonomic scope" value="Bacteria"/>
</dbReference>
<dbReference type="HOGENOM" id="CLU_108953_0_0_9"/>
<dbReference type="Proteomes" id="UP000001697">
    <property type="component" value="Chromosome"/>
</dbReference>
<dbReference type="GO" id="GO:0005829">
    <property type="term" value="C:cytosol"/>
    <property type="evidence" value="ECO:0007669"/>
    <property type="project" value="TreeGrafter"/>
</dbReference>
<dbReference type="GO" id="GO:0003723">
    <property type="term" value="F:RNA binding"/>
    <property type="evidence" value="ECO:0007669"/>
    <property type="project" value="UniProtKB-UniRule"/>
</dbReference>
<dbReference type="GO" id="GO:0070929">
    <property type="term" value="P:trans-translation"/>
    <property type="evidence" value="ECO:0007669"/>
    <property type="project" value="UniProtKB-UniRule"/>
</dbReference>
<dbReference type="CDD" id="cd09294">
    <property type="entry name" value="SmpB"/>
    <property type="match status" value="1"/>
</dbReference>
<dbReference type="Gene3D" id="2.40.280.10">
    <property type="match status" value="1"/>
</dbReference>
<dbReference type="HAMAP" id="MF_00023">
    <property type="entry name" value="SmpB"/>
    <property type="match status" value="1"/>
</dbReference>
<dbReference type="InterPro" id="IPR023620">
    <property type="entry name" value="SmpB"/>
</dbReference>
<dbReference type="InterPro" id="IPR000037">
    <property type="entry name" value="SsrA-bd_prot"/>
</dbReference>
<dbReference type="InterPro" id="IPR020081">
    <property type="entry name" value="SsrA-bd_prot_CS"/>
</dbReference>
<dbReference type="NCBIfam" id="NF003843">
    <property type="entry name" value="PRK05422.1"/>
    <property type="match status" value="1"/>
</dbReference>
<dbReference type="NCBIfam" id="TIGR00086">
    <property type="entry name" value="smpB"/>
    <property type="match status" value="1"/>
</dbReference>
<dbReference type="PANTHER" id="PTHR30308:SF2">
    <property type="entry name" value="SSRA-BINDING PROTEIN"/>
    <property type="match status" value="1"/>
</dbReference>
<dbReference type="PANTHER" id="PTHR30308">
    <property type="entry name" value="TMRNA-BINDING COMPONENT OF TRANS-TRANSLATION TAGGING COMPLEX"/>
    <property type="match status" value="1"/>
</dbReference>
<dbReference type="Pfam" id="PF01668">
    <property type="entry name" value="SmpB"/>
    <property type="match status" value="1"/>
</dbReference>
<dbReference type="SUPFAM" id="SSF74982">
    <property type="entry name" value="Small protein B (SmpB)"/>
    <property type="match status" value="1"/>
</dbReference>
<dbReference type="PROSITE" id="PS01317">
    <property type="entry name" value="SSRP"/>
    <property type="match status" value="1"/>
</dbReference>
<feature type="chain" id="PRO_1000090159" description="SsrA-binding protein">
    <location>
        <begin position="1"/>
        <end position="157"/>
    </location>
</feature>
<protein>
    <recommendedName>
        <fullName evidence="1">SsrA-binding protein</fullName>
    </recommendedName>
    <alternativeName>
        <fullName evidence="1">Small protein B</fullName>
    </alternativeName>
</protein>
<accession>B2GAM5</accession>
<gene>
    <name evidence="1" type="primary">smpB</name>
    <name type="ordered locus">LAF_0371</name>
</gene>
<proteinExistence type="inferred from homology"/>
<organism>
    <name type="scientific">Limosilactobacillus fermentum (strain NBRC 3956 / LMG 18251)</name>
    <name type="common">Lactobacillus fermentum</name>
    <dbReference type="NCBI Taxonomy" id="334390"/>
    <lineage>
        <taxon>Bacteria</taxon>
        <taxon>Bacillati</taxon>
        <taxon>Bacillota</taxon>
        <taxon>Bacilli</taxon>
        <taxon>Lactobacillales</taxon>
        <taxon>Lactobacillaceae</taxon>
        <taxon>Limosilactobacillus</taxon>
    </lineage>
</organism>
<comment type="function">
    <text evidence="1">Required for rescue of stalled ribosomes mediated by trans-translation. Binds to transfer-messenger RNA (tmRNA), required for stable association of tmRNA with ribosomes. tmRNA and SmpB together mimic tRNA shape, replacing the anticodon stem-loop with SmpB. tmRNA is encoded by the ssrA gene; the 2 termini fold to resemble tRNA(Ala) and it encodes a 'tag peptide', a short internal open reading frame. During trans-translation Ala-aminoacylated tmRNA acts like a tRNA, entering the A-site of stalled ribosomes, displacing the stalled mRNA. The ribosome then switches to translate the ORF on the tmRNA; the nascent peptide is terminated with the 'tag peptide' encoded by the tmRNA and targeted for degradation. The ribosome is freed to recommence translation, which seems to be the essential function of trans-translation.</text>
</comment>
<comment type="subcellular location">
    <subcellularLocation>
        <location evidence="1">Cytoplasm</location>
    </subcellularLocation>
    <text evidence="1">The tmRNA-SmpB complex associates with stalled 70S ribosomes.</text>
</comment>
<comment type="similarity">
    <text evidence="1">Belongs to the SmpB family.</text>
</comment>
<reference key="1">
    <citation type="journal article" date="2008" name="DNA Res.">
        <title>Comparative genome analysis of Lactobacillus reuteri and Lactobacillus fermentum reveal a genomic island for reuterin and cobalamin production.</title>
        <authorList>
            <person name="Morita H."/>
            <person name="Toh H."/>
            <person name="Fukuda S."/>
            <person name="Horikawa H."/>
            <person name="Oshima K."/>
            <person name="Suzuki T."/>
            <person name="Murakami M."/>
            <person name="Hisamatsu S."/>
            <person name="Kato Y."/>
            <person name="Takizawa T."/>
            <person name="Fukuoka H."/>
            <person name="Yoshimura T."/>
            <person name="Itoh K."/>
            <person name="O'Sullivan D.J."/>
            <person name="McKay L.L."/>
            <person name="Ohno H."/>
            <person name="Kikuchi J."/>
            <person name="Masaoka T."/>
            <person name="Hattori M."/>
        </authorList>
    </citation>
    <scope>NUCLEOTIDE SEQUENCE [LARGE SCALE GENOMIC DNA]</scope>
    <source>
        <strain>NBRC 3956 / LMG 18251</strain>
    </source>
</reference>
<name>SSRP_LIMF3</name>